<gene>
    <name type="primary">coxM</name>
    <name type="ordered locus">OCA5_pHCG300290</name>
</gene>
<evidence type="ECO:0000255" key="1">
    <source>
        <dbReference type="PROSITE-ProRule" id="PRU00718"/>
    </source>
</evidence>
<evidence type="ECO:0000269" key="2">
    <source>
    </source>
</evidence>
<evidence type="ECO:0000269" key="3">
    <source>
    </source>
</evidence>
<evidence type="ECO:0000269" key="4">
    <source>
    </source>
</evidence>
<evidence type="ECO:0000305" key="5"/>
<evidence type="ECO:0007829" key="6">
    <source>
        <dbReference type="PDB" id="1N62"/>
    </source>
</evidence>
<geneLocation type="plasmid">
    <name>megaplasmid pHCG3</name>
</geneLocation>
<accession>P19920</accession>
<accession>F8C0Z4</accession>
<accession>Q51323</accession>
<name>DCMM_AFIC5</name>
<comment type="function">
    <text evidence="3 4">Catalyzes the oxidation of carbon monoxide to carbon dioxide.</text>
</comment>
<comment type="catalytic activity">
    <reaction evidence="3 4">
        <text>CO + a quinone + H2O = a quinol + CO2</text>
        <dbReference type="Rhea" id="RHEA:48880"/>
        <dbReference type="ChEBI" id="CHEBI:15377"/>
        <dbReference type="ChEBI" id="CHEBI:16526"/>
        <dbReference type="ChEBI" id="CHEBI:17245"/>
        <dbReference type="ChEBI" id="CHEBI:24646"/>
        <dbReference type="ChEBI" id="CHEBI:132124"/>
        <dbReference type="EC" id="1.2.5.3"/>
    </reaction>
</comment>
<comment type="cofactor">
    <cofactor evidence="2 3">
        <name>FAD</name>
        <dbReference type="ChEBI" id="CHEBI:57692"/>
    </cofactor>
    <text evidence="2 3">Binds 1 FAD per subunit.</text>
</comment>
<comment type="biophysicochemical properties">
    <kinetics>
        <KM evidence="4">16.4 uM for 1,4-benzoquinone</KM>
    </kinetics>
</comment>
<comment type="subunit">
    <text evidence="2">Dimer of heterotrimers. Each heterotrimer consists of a large, a medium and a small subunit.</text>
</comment>
<feature type="chain" id="PRO_0000079813" description="Carbon monoxide dehydrogenase medium chain">
    <location>
        <begin position="1"/>
        <end position="288"/>
    </location>
</feature>
<feature type="domain" description="FAD-binding PCMH-type" evidence="1">
    <location>
        <begin position="1"/>
        <end position="177"/>
    </location>
</feature>
<feature type="binding site" evidence="2 3">
    <location>
        <begin position="32"/>
        <end position="36"/>
    </location>
    <ligand>
        <name>FAD</name>
        <dbReference type="ChEBI" id="CHEBI:57692"/>
    </ligand>
</feature>
<feature type="binding site" evidence="2 3">
    <location>
        <begin position="111"/>
        <end position="115"/>
    </location>
    <ligand>
        <name>FAD</name>
        <dbReference type="ChEBI" id="CHEBI:57692"/>
    </ligand>
</feature>
<feature type="sequence conflict" description="In Ref. 5; AA sequence." evidence="5" ref="5">
    <original>M</original>
    <variation>MM</variation>
    <location>
        <position position="1"/>
    </location>
</feature>
<feature type="strand" evidence="6">
    <location>
        <begin position="7"/>
        <end position="9"/>
    </location>
</feature>
<feature type="helix" evidence="6">
    <location>
        <begin position="14"/>
        <end position="24"/>
    </location>
</feature>
<feature type="helix" evidence="6">
    <location>
        <begin position="25"/>
        <end position="27"/>
    </location>
</feature>
<feature type="strand" evidence="6">
    <location>
        <begin position="28"/>
        <end position="33"/>
    </location>
</feature>
<feature type="helix" evidence="6">
    <location>
        <begin position="37"/>
        <end position="42"/>
    </location>
</feature>
<feature type="strand" evidence="6">
    <location>
        <begin position="49"/>
        <end position="53"/>
    </location>
</feature>
<feature type="helix" evidence="6">
    <location>
        <begin position="58"/>
        <end position="60"/>
    </location>
</feature>
<feature type="strand" evidence="6">
    <location>
        <begin position="63"/>
        <end position="66"/>
    </location>
</feature>
<feature type="strand" evidence="6">
    <location>
        <begin position="69"/>
        <end position="73"/>
    </location>
</feature>
<feature type="helix" evidence="6">
    <location>
        <begin position="78"/>
        <end position="83"/>
    </location>
</feature>
<feature type="helix" evidence="6">
    <location>
        <begin position="85"/>
        <end position="90"/>
    </location>
</feature>
<feature type="helix" evidence="6">
    <location>
        <begin position="92"/>
        <end position="98"/>
    </location>
</feature>
<feature type="helix" evidence="6">
    <location>
        <begin position="104"/>
        <end position="109"/>
    </location>
</feature>
<feature type="helix" evidence="6">
    <location>
        <begin position="112"/>
        <end position="117"/>
    </location>
</feature>
<feature type="helix" evidence="6">
    <location>
        <begin position="125"/>
        <end position="132"/>
    </location>
</feature>
<feature type="strand" evidence="6">
    <location>
        <begin position="135"/>
        <end position="140"/>
    </location>
</feature>
<feature type="strand" evidence="6">
    <location>
        <begin position="143"/>
        <end position="148"/>
    </location>
</feature>
<feature type="helix" evidence="6">
    <location>
        <begin position="149"/>
        <end position="152"/>
    </location>
</feature>
<feature type="strand" evidence="6">
    <location>
        <begin position="153"/>
        <end position="155"/>
    </location>
</feature>
<feature type="strand" evidence="6">
    <location>
        <begin position="158"/>
        <end position="160"/>
    </location>
</feature>
<feature type="strand" evidence="6">
    <location>
        <begin position="166"/>
        <end position="173"/>
    </location>
</feature>
<feature type="strand" evidence="6">
    <location>
        <begin position="180"/>
        <end position="186"/>
    </location>
</feature>
<feature type="strand" evidence="6">
    <location>
        <begin position="195"/>
        <end position="205"/>
    </location>
</feature>
<feature type="strand" evidence="6">
    <location>
        <begin position="208"/>
        <end position="222"/>
    </location>
</feature>
<feature type="helix" evidence="6">
    <location>
        <begin position="227"/>
        <end position="233"/>
    </location>
</feature>
<feature type="helix" evidence="6">
    <location>
        <begin position="240"/>
        <end position="253"/>
    </location>
</feature>
<feature type="helix" evidence="6">
    <location>
        <begin position="264"/>
        <end position="285"/>
    </location>
</feature>
<proteinExistence type="evidence at protein level"/>
<reference key="1">
    <citation type="journal article" date="1995" name="J. Bacteriol.">
        <title>Molecular characterization of the gene cluster coxMSL encoding the molybdenum-containing carbon monoxide dehydrogenase of Oligotropha carboxidovorans.</title>
        <authorList>
            <person name="Schuebel U."/>
            <person name="Kraut M."/>
            <person name="Moersdorf G."/>
            <person name="Meyer O."/>
        </authorList>
    </citation>
    <scope>NUCLEOTIDE SEQUENCE [GENOMIC DNA]</scope>
    <source>
        <strain>ATCC 49405 / DSM 1227 / KCTC 32145 / OM5</strain>
    </source>
</reference>
<reference key="2">
    <citation type="journal article" date="2003" name="Gene">
        <title>Complete nucleotide sequence of the circular megaplasmid pHCG3 of Oligotropha carboxidovorans: function in the chemolithoautotrophic utilization of CO, H(2) and CO(2).</title>
        <authorList>
            <person name="Fuhrmann S."/>
            <person name="Ferner M."/>
            <person name="Jeffke T."/>
            <person name="Henne A."/>
            <person name="Gottschalk G."/>
            <person name="Meyer O."/>
        </authorList>
    </citation>
    <scope>NUCLEOTIDE SEQUENCE [LARGE SCALE GENOMIC DNA]</scope>
    <source>
        <strain>ATCC 49405 / DSM 1227 / KCTC 32145 / OM5</strain>
    </source>
</reference>
<reference key="3">
    <citation type="journal article" date="2011" name="J. Bacteriol.">
        <title>Complete genome sequences of the chemolithoautotrophic Oligotropha carboxidovorans strains OM4 and OM5.</title>
        <authorList>
            <person name="Volland S."/>
            <person name="Rachinger M."/>
            <person name="Strittmatter A."/>
            <person name="Daniel R."/>
            <person name="Gottschalk G."/>
            <person name="Meyer O."/>
        </authorList>
    </citation>
    <scope>NUCLEOTIDE SEQUENCE [LARGE SCALE GENOMIC DNA]</scope>
    <source>
        <strain>ATCC 49405 / DSM 1227 / KCTC 32145 / OM5</strain>
    </source>
</reference>
<reference key="4">
    <citation type="journal article" date="1992" name="Arch. Microbiol.">
        <title>The structural genes encoding CO dehydrogenase subunits (cox L, M and S) in Pseudomonas carboxydovorans OM5 reside on plasmid pHCG3 and are, with the exception of Streptomyces thermoautotrophicus, conserved in carboxydotrophic bacteria.</title>
        <authorList>
            <person name="Hugendieck I."/>
            <person name="Meyer O."/>
        </authorList>
    </citation>
    <scope>PROTEIN SEQUENCE OF 1-29</scope>
    <source>
        <strain>ATCC 49405 / DSM 1227 / KCTC 32145 / OM5</strain>
    </source>
</reference>
<reference key="5">
    <citation type="journal article" date="1989" name="Arch. Microbiol.">
        <title>Homology and distribution of CO dehydrogenase structural genes in carboxydotrophic bacteria.</title>
        <authorList>
            <person name="Kraut M."/>
            <person name="Hugendieck I."/>
            <person name="Herwig S."/>
            <person name="Meyer O."/>
        </authorList>
    </citation>
    <scope>PROTEIN SEQUENCE OF 1-14</scope>
</reference>
<reference key="6">
    <citation type="journal article" date="2011" name="Biochemistry">
        <title>Reaction of the molybdenum- and copper-containing carbon monoxide dehydrogenase from Oligotropha carboxydovorans with quinones.</title>
        <authorList>
            <person name="Wilcoxen J."/>
            <person name="Zhang B."/>
            <person name="Hille R."/>
        </authorList>
    </citation>
    <scope>FUNCTION</scope>
    <scope>CATALYTIC ACTIVITY</scope>
    <scope>BIOPHYSICOCHEMICAL PROPERTIES</scope>
</reference>
<reference key="7">
    <citation type="journal article" date="1999" name="Proc. Natl. Acad. Sci. U.S.A.">
        <title>Crystal structure and mechanism of CO dehydrogenase, a molybdo iron-sulfur flavoprotein containing S-selanylcysteine.</title>
        <authorList>
            <person name="Dobbek H."/>
            <person name="Gremer L."/>
            <person name="Meyer O."/>
            <person name="Huber R."/>
        </authorList>
    </citation>
    <scope>X-RAY CRYSTALLOGRAPHY (2.2 ANGSTROMS) IN COMPLEX WITH CODH LARGE AND SMALL SUBUNITS AND FAD</scope>
    <scope>COFACTOR</scope>
    <scope>SUBUNIT</scope>
</reference>
<reference key="8">
    <citation type="journal article" date="2002" name="Proc. Natl. Acad. Sci. U.S.A.">
        <title>Catalysis at a dinuclear CuSMo(==O)OH cluster in a CO dehydrogenase resolved at 1.1-A resolution.</title>
        <authorList>
            <person name="Dobbek H."/>
            <person name="Gremer L."/>
            <person name="Kiefersauer R."/>
            <person name="Huber R."/>
            <person name="Meyer O."/>
        </authorList>
    </citation>
    <scope>X-RAY CRYSTALLOGRAPHY (1.09 ANGSTROMS) IN COMPLEX WITH CODH LARGE AND SMALL SUBUNITS AND FAD</scope>
    <scope>FUNCTION</scope>
    <scope>COFACTOR</scope>
    <scope>CATALYTIC ACTIVITY</scope>
    <scope>REACTION MECHANISM</scope>
</reference>
<keyword id="KW-0002">3D-structure</keyword>
<keyword id="KW-0903">Direct protein sequencing</keyword>
<keyword id="KW-0274">FAD</keyword>
<keyword id="KW-0285">Flavoprotein</keyword>
<keyword id="KW-0560">Oxidoreductase</keyword>
<keyword id="KW-0614">Plasmid</keyword>
<keyword id="KW-1185">Reference proteome</keyword>
<protein>
    <recommendedName>
        <fullName>Carbon monoxide dehydrogenase medium chain</fullName>
        <shortName>CO dehydrogenase subunit M</shortName>
        <shortName>CO-DH M</shortName>
        <ecNumber evidence="3 4">1.2.5.3</ecNumber>
    </recommendedName>
</protein>
<sequence length="288" mass="30241">MIPGSFDYHRPKSIADAVALLTKLGEDARPLAGGHSLIPIMKTRLATPEHLVDLRDIGDLVGIREEGTDVVIGAMTTQHALIGSDFLAAKLPIIRETSLLIADPQIRYMGTIGGNAANGDPGNDMPALMQCLGAAYELTGPEGARIVAARDYYQGAYFTAIEPGELLTAIRIPVPPTGHGYAYEKLKRKIGDYATAAAAVVLTMSGGKCVTASIGLTNVANTPLWAEEAGKVLVGTALDKPALDKAVALAEAITAPASDGRGPAEYRTKMAGVMLRRAVERAKARAKN</sequence>
<organism>
    <name type="scientific">Afipia carboxidovorans (strain ATCC 49405 / DSM 1227 / KCTC 32145 / OM5)</name>
    <name type="common">Oligotropha carboxidovorans</name>
    <dbReference type="NCBI Taxonomy" id="504832"/>
    <lineage>
        <taxon>Bacteria</taxon>
        <taxon>Pseudomonadati</taxon>
        <taxon>Pseudomonadota</taxon>
        <taxon>Alphaproteobacteria</taxon>
        <taxon>Hyphomicrobiales</taxon>
        <taxon>Nitrobacteraceae</taxon>
        <taxon>Afipia</taxon>
    </lineage>
</organism>
<dbReference type="EC" id="1.2.5.3" evidence="3 4"/>
<dbReference type="EMBL" id="CP002827">
    <property type="protein sequence ID" value="AEI08104.1"/>
    <property type="molecule type" value="Genomic_DNA"/>
</dbReference>
<dbReference type="PIR" id="A56279">
    <property type="entry name" value="A56279"/>
</dbReference>
<dbReference type="RefSeq" id="WP_013913728.1">
    <property type="nucleotide sequence ID" value="NC_015689.1"/>
</dbReference>
<dbReference type="PDB" id="1N5W">
    <property type="method" value="X-ray"/>
    <property type="resolution" value="1.50 A"/>
    <property type="chains" value="C/F=1-288"/>
</dbReference>
<dbReference type="PDB" id="1N60">
    <property type="method" value="X-ray"/>
    <property type="resolution" value="1.19 A"/>
    <property type="chains" value="C/F=1-288"/>
</dbReference>
<dbReference type="PDB" id="1N61">
    <property type="method" value="X-ray"/>
    <property type="resolution" value="1.30 A"/>
    <property type="chains" value="C/F=1-288"/>
</dbReference>
<dbReference type="PDB" id="1N62">
    <property type="method" value="X-ray"/>
    <property type="resolution" value="1.09 A"/>
    <property type="chains" value="C/F=1-288"/>
</dbReference>
<dbReference type="PDB" id="1N63">
    <property type="method" value="X-ray"/>
    <property type="resolution" value="1.21 A"/>
    <property type="chains" value="C/F=1-288"/>
</dbReference>
<dbReference type="PDB" id="1ZXI">
    <property type="method" value="X-ray"/>
    <property type="resolution" value="1.70 A"/>
    <property type="chains" value="C/F=1-288"/>
</dbReference>
<dbReference type="PDBsum" id="1N5W"/>
<dbReference type="PDBsum" id="1N60"/>
<dbReference type="PDBsum" id="1N61"/>
<dbReference type="PDBsum" id="1N62"/>
<dbReference type="PDBsum" id="1N63"/>
<dbReference type="PDBsum" id="1ZXI"/>
<dbReference type="SMR" id="P19920"/>
<dbReference type="KEGG" id="ocg:OCA5_pHCG300290"/>
<dbReference type="PATRIC" id="fig|504832.7.peg.3604"/>
<dbReference type="HOGENOM" id="CLU_058050_3_0_5"/>
<dbReference type="OrthoDB" id="9793944at2"/>
<dbReference type="BioCyc" id="MetaCyc:MONOMER-19675"/>
<dbReference type="BRENDA" id="1.2.5.3">
    <property type="organism ID" value="4399"/>
</dbReference>
<dbReference type="BRENDA" id="1.2.7.4">
    <property type="organism ID" value="4399"/>
</dbReference>
<dbReference type="SABIO-RK" id="P19920"/>
<dbReference type="EvolutionaryTrace" id="P19920"/>
<dbReference type="Proteomes" id="UP000007730">
    <property type="component" value="Plasmid pHCG3"/>
</dbReference>
<dbReference type="GO" id="GO:0008805">
    <property type="term" value="F:carbon-monoxide oxygenase activity"/>
    <property type="evidence" value="ECO:0007669"/>
    <property type="project" value="UniProtKB-EC"/>
</dbReference>
<dbReference type="GO" id="GO:0071949">
    <property type="term" value="F:FAD binding"/>
    <property type="evidence" value="ECO:0007669"/>
    <property type="project" value="InterPro"/>
</dbReference>
<dbReference type="FunFam" id="3.30.465.10:FF:000017">
    <property type="entry name" value="Xanthine dehydrogenase, FAD binding subunit"/>
    <property type="match status" value="1"/>
</dbReference>
<dbReference type="Gene3D" id="3.30.465.10">
    <property type="match status" value="1"/>
</dbReference>
<dbReference type="Gene3D" id="3.30.390.50">
    <property type="entry name" value="CO dehydrogenase flavoprotein, C-terminal domain"/>
    <property type="match status" value="1"/>
</dbReference>
<dbReference type="Gene3D" id="3.30.43.10">
    <property type="entry name" value="Uridine Diphospho-n-acetylenolpyruvylglucosamine Reductase, domain 2"/>
    <property type="match status" value="1"/>
</dbReference>
<dbReference type="InterPro" id="IPR005107">
    <property type="entry name" value="CO_DH_flav_C"/>
</dbReference>
<dbReference type="InterPro" id="IPR036683">
    <property type="entry name" value="CO_DH_flav_C_dom_sf"/>
</dbReference>
<dbReference type="InterPro" id="IPR051312">
    <property type="entry name" value="Diverse_Substr_Oxidored"/>
</dbReference>
<dbReference type="InterPro" id="IPR016166">
    <property type="entry name" value="FAD-bd_PCMH"/>
</dbReference>
<dbReference type="InterPro" id="IPR036318">
    <property type="entry name" value="FAD-bd_PCMH-like_sf"/>
</dbReference>
<dbReference type="InterPro" id="IPR016167">
    <property type="entry name" value="FAD-bd_PCMH_sub1"/>
</dbReference>
<dbReference type="InterPro" id="IPR016169">
    <property type="entry name" value="FAD-bd_PCMH_sub2"/>
</dbReference>
<dbReference type="InterPro" id="IPR002346">
    <property type="entry name" value="Mopterin_DH_FAD-bd"/>
</dbReference>
<dbReference type="PANTHER" id="PTHR42659">
    <property type="entry name" value="XANTHINE DEHYDROGENASE SUBUNIT C-RELATED"/>
    <property type="match status" value="1"/>
</dbReference>
<dbReference type="PANTHER" id="PTHR42659:SF2">
    <property type="entry name" value="XANTHINE DEHYDROGENASE SUBUNIT C-RELATED"/>
    <property type="match status" value="1"/>
</dbReference>
<dbReference type="Pfam" id="PF03450">
    <property type="entry name" value="CO_deh_flav_C"/>
    <property type="match status" value="1"/>
</dbReference>
<dbReference type="Pfam" id="PF00941">
    <property type="entry name" value="FAD_binding_5"/>
    <property type="match status" value="1"/>
</dbReference>
<dbReference type="SMART" id="SM01092">
    <property type="entry name" value="CO_deh_flav_C"/>
    <property type="match status" value="1"/>
</dbReference>
<dbReference type="SUPFAM" id="SSF55447">
    <property type="entry name" value="CO dehydrogenase flavoprotein C-terminal domain-like"/>
    <property type="match status" value="1"/>
</dbReference>
<dbReference type="SUPFAM" id="SSF56176">
    <property type="entry name" value="FAD-binding/transporter-associated domain-like"/>
    <property type="match status" value="1"/>
</dbReference>
<dbReference type="PROSITE" id="PS51387">
    <property type="entry name" value="FAD_PCMH"/>
    <property type="match status" value="1"/>
</dbReference>